<proteinExistence type="evidence at protein level"/>
<feature type="initiator methionine" description="Removed" evidence="2">
    <location>
        <position position="1"/>
    </location>
</feature>
<feature type="chain" id="PRO_0000420490" description="Ubiquitin carboxyl-terminal hydrolase 15">
    <location>
        <begin position="2"/>
        <end position="952"/>
    </location>
</feature>
<feature type="domain" description="DUSP" evidence="3">
    <location>
        <begin position="7"/>
        <end position="118"/>
    </location>
</feature>
<feature type="domain" description="USP" evidence="4">
    <location>
        <begin position="260"/>
        <end position="904"/>
    </location>
</feature>
<feature type="region of interest" description="Mediates interaction with SART3" evidence="2">
    <location>
        <begin position="2"/>
        <end position="223"/>
    </location>
</feature>
<feature type="region of interest" description="Disordered" evidence="7">
    <location>
        <begin position="597"/>
        <end position="665"/>
    </location>
</feature>
<feature type="region of interest" description="Disordered" evidence="7">
    <location>
        <begin position="923"/>
        <end position="952"/>
    </location>
</feature>
<feature type="compositionally biased region" description="Acidic residues" evidence="7">
    <location>
        <begin position="627"/>
        <end position="644"/>
    </location>
</feature>
<feature type="compositionally biased region" description="Acidic residues" evidence="7">
    <location>
        <begin position="931"/>
        <end position="945"/>
    </location>
</feature>
<feature type="active site" description="Nucleophile" evidence="5 6">
    <location>
        <position position="269"/>
    </location>
</feature>
<feature type="active site" description="Proton acceptor" evidence="5 6">
    <location>
        <position position="862"/>
    </location>
</feature>
<feature type="modified residue" description="N-acetylalanine" evidence="2">
    <location>
        <position position="2"/>
    </location>
</feature>
<feature type="modified residue" description="Phosphothreonine" evidence="1">
    <location>
        <position position="573"/>
    </location>
</feature>
<feature type="modified residue" description="Phosphoserine" evidence="2">
    <location>
        <position position="932"/>
    </location>
</feature>
<feature type="modified residue" description="Phosphoserine" evidence="2">
    <location>
        <position position="936"/>
    </location>
</feature>
<dbReference type="EC" id="3.4.19.12" evidence="8"/>
<dbReference type="EMBL" id="AF106657">
    <property type="protein sequence ID" value="AAF14188.1"/>
    <property type="molecule type" value="mRNA"/>
</dbReference>
<dbReference type="RefSeq" id="NP_660185.1">
    <property type="nucleotide sequence ID" value="NM_145184.1"/>
</dbReference>
<dbReference type="BMRB" id="Q9R085"/>
<dbReference type="SMR" id="Q9R085"/>
<dbReference type="BioGRID" id="251185">
    <property type="interactions" value="1"/>
</dbReference>
<dbReference type="FunCoup" id="Q9R085">
    <property type="interactions" value="2754"/>
</dbReference>
<dbReference type="IntAct" id="Q9R085">
    <property type="interactions" value="1"/>
</dbReference>
<dbReference type="STRING" id="10116.ENSRNOP00000034485"/>
<dbReference type="MEROPS" id="C19.022"/>
<dbReference type="GlyGen" id="Q9R085">
    <property type="glycosylation" value="1 site"/>
</dbReference>
<dbReference type="iPTMnet" id="Q9R085"/>
<dbReference type="PhosphoSitePlus" id="Q9R085"/>
<dbReference type="jPOST" id="Q9R085"/>
<dbReference type="PaxDb" id="10116-ENSRNOP00000034485"/>
<dbReference type="GeneID" id="171329"/>
<dbReference type="KEGG" id="rno:171329"/>
<dbReference type="AGR" id="RGD:628795"/>
<dbReference type="CTD" id="9958"/>
<dbReference type="RGD" id="628795">
    <property type="gene designation" value="Usp15"/>
</dbReference>
<dbReference type="eggNOG" id="KOG1870">
    <property type="taxonomic scope" value="Eukaryota"/>
</dbReference>
<dbReference type="InParanoid" id="Q9R085"/>
<dbReference type="OrthoDB" id="265776at2759"/>
<dbReference type="PhylomeDB" id="Q9R085"/>
<dbReference type="Reactome" id="R-RNO-5689880">
    <property type="pathway name" value="Ub-specific processing proteases"/>
</dbReference>
<dbReference type="PRO" id="PR:Q9R085"/>
<dbReference type="Proteomes" id="UP000002494">
    <property type="component" value="Unplaced"/>
</dbReference>
<dbReference type="GO" id="GO:0005737">
    <property type="term" value="C:cytoplasm"/>
    <property type="evidence" value="ECO:0000314"/>
    <property type="project" value="UniProtKB"/>
</dbReference>
<dbReference type="GO" id="GO:0005739">
    <property type="term" value="C:mitochondrion"/>
    <property type="evidence" value="ECO:0007669"/>
    <property type="project" value="UniProtKB-SubCell"/>
</dbReference>
<dbReference type="GO" id="GO:0005634">
    <property type="term" value="C:nucleus"/>
    <property type="evidence" value="ECO:0000314"/>
    <property type="project" value="UniProtKB"/>
</dbReference>
<dbReference type="GO" id="GO:0004843">
    <property type="term" value="F:cysteine-type deubiquitinase activity"/>
    <property type="evidence" value="ECO:0000314"/>
    <property type="project" value="UniProtKB"/>
</dbReference>
<dbReference type="GO" id="GO:0004197">
    <property type="term" value="F:cysteine-type endopeptidase activity"/>
    <property type="evidence" value="ECO:0000250"/>
    <property type="project" value="UniProtKB"/>
</dbReference>
<dbReference type="GO" id="GO:0101005">
    <property type="term" value="F:deubiquitinase activity"/>
    <property type="evidence" value="ECO:0000266"/>
    <property type="project" value="RGD"/>
</dbReference>
<dbReference type="GO" id="GO:0042802">
    <property type="term" value="F:identical protein binding"/>
    <property type="evidence" value="ECO:0000266"/>
    <property type="project" value="RGD"/>
</dbReference>
<dbReference type="GO" id="GO:1990380">
    <property type="term" value="F:K48-linked deubiquitinase activity"/>
    <property type="evidence" value="ECO:0000266"/>
    <property type="project" value="RGD"/>
</dbReference>
<dbReference type="GO" id="GO:0046332">
    <property type="term" value="F:SMAD binding"/>
    <property type="evidence" value="ECO:0000266"/>
    <property type="project" value="RGD"/>
</dbReference>
<dbReference type="GO" id="GO:0005160">
    <property type="term" value="F:transforming growth factor beta receptor binding"/>
    <property type="evidence" value="ECO:0000266"/>
    <property type="project" value="RGD"/>
</dbReference>
<dbReference type="GO" id="GO:0061649">
    <property type="term" value="F:ubiquitin-modified histone reader activity"/>
    <property type="evidence" value="ECO:0000266"/>
    <property type="project" value="RGD"/>
</dbReference>
<dbReference type="GO" id="GO:0030509">
    <property type="term" value="P:BMP signaling pathway"/>
    <property type="evidence" value="ECO:0000250"/>
    <property type="project" value="UniProtKB"/>
</dbReference>
<dbReference type="GO" id="GO:0035520">
    <property type="term" value="P:monoubiquitinated protein deubiquitination"/>
    <property type="evidence" value="ECO:0000250"/>
    <property type="project" value="UniProtKB"/>
</dbReference>
<dbReference type="GO" id="GO:1905035">
    <property type="term" value="P:negative regulation of antifungal innate immune response"/>
    <property type="evidence" value="ECO:0000250"/>
    <property type="project" value="UniProtKB"/>
</dbReference>
<dbReference type="GO" id="GO:0030512">
    <property type="term" value="P:negative regulation of transforming growth factor beta receptor signaling pathway"/>
    <property type="evidence" value="ECO:0000250"/>
    <property type="project" value="UniProtKB"/>
</dbReference>
<dbReference type="GO" id="GO:1900246">
    <property type="term" value="P:positive regulation of RIG-I signaling pathway"/>
    <property type="evidence" value="ECO:0000266"/>
    <property type="project" value="RGD"/>
</dbReference>
<dbReference type="GO" id="GO:0016579">
    <property type="term" value="P:protein deubiquitination"/>
    <property type="evidence" value="ECO:0000314"/>
    <property type="project" value="UniProtKB"/>
</dbReference>
<dbReference type="GO" id="GO:1990167">
    <property type="term" value="P:protein K27-linked deubiquitination"/>
    <property type="evidence" value="ECO:0000250"/>
    <property type="project" value="UniProtKB"/>
</dbReference>
<dbReference type="GO" id="GO:0006508">
    <property type="term" value="P:proteolysis"/>
    <property type="evidence" value="ECO:0007669"/>
    <property type="project" value="UniProtKB-KW"/>
</dbReference>
<dbReference type="GO" id="GO:1902238">
    <property type="term" value="P:regulation of intrinsic apoptotic signaling pathway in response to osmotic stress by p53 class mediator"/>
    <property type="evidence" value="ECO:0000266"/>
    <property type="project" value="RGD"/>
</dbReference>
<dbReference type="GO" id="GO:0140673">
    <property type="term" value="P:transcription elongation-coupled chromatin remodeling"/>
    <property type="evidence" value="ECO:0000250"/>
    <property type="project" value="UniProtKB"/>
</dbReference>
<dbReference type="GO" id="GO:0007179">
    <property type="term" value="P:transforming growth factor beta receptor signaling pathway"/>
    <property type="evidence" value="ECO:0000266"/>
    <property type="project" value="RGD"/>
</dbReference>
<dbReference type="CDD" id="cd02674">
    <property type="entry name" value="Peptidase_C19R"/>
    <property type="match status" value="1"/>
</dbReference>
<dbReference type="FunFam" id="3.30.2230.10:FF:000003">
    <property type="entry name" value="ubiquitin carboxyl-terminal hydrolase 15 isoform X1"/>
    <property type="match status" value="1"/>
</dbReference>
<dbReference type="FunFam" id="3.90.70.10:FF:000013">
    <property type="entry name" value="ubiquitin carboxyl-terminal hydrolase 15 isoform X1"/>
    <property type="match status" value="1"/>
</dbReference>
<dbReference type="FunFam" id="3.90.70.10:FF:000034">
    <property type="entry name" value="ubiquitin carboxyl-terminal hydrolase 15 isoform X1"/>
    <property type="match status" value="1"/>
</dbReference>
<dbReference type="FunFam" id="3.10.20.90:FF:000020">
    <property type="entry name" value="ubiquitin carboxyl-terminal hydrolase 15 isoform X2"/>
    <property type="match status" value="1"/>
</dbReference>
<dbReference type="Gene3D" id="3.90.70.10">
    <property type="entry name" value="Cysteine proteinases"/>
    <property type="match status" value="2"/>
</dbReference>
<dbReference type="Gene3D" id="3.30.2230.10">
    <property type="entry name" value="DUSP-like"/>
    <property type="match status" value="1"/>
</dbReference>
<dbReference type="Gene3D" id="3.10.20.90">
    <property type="entry name" value="Phosphatidylinositol 3-kinase Catalytic Subunit, Chain A, domain 1"/>
    <property type="match status" value="1"/>
</dbReference>
<dbReference type="InterPro" id="IPR035927">
    <property type="entry name" value="DUSP-like_sf"/>
</dbReference>
<dbReference type="InterPro" id="IPR038765">
    <property type="entry name" value="Papain-like_cys_pep_sf"/>
</dbReference>
<dbReference type="InterPro" id="IPR006615">
    <property type="entry name" value="Pept_C19_DUSP"/>
</dbReference>
<dbReference type="InterPro" id="IPR001394">
    <property type="entry name" value="Peptidase_C19_UCH"/>
</dbReference>
<dbReference type="InterPro" id="IPR013792">
    <property type="entry name" value="RNA3'P_cycl/enolpyr_Trfase_a/b"/>
</dbReference>
<dbReference type="InterPro" id="IPR050185">
    <property type="entry name" value="Ub_carboxyl-term_hydrolase"/>
</dbReference>
<dbReference type="InterPro" id="IPR028135">
    <property type="entry name" value="Ub_USP-typ"/>
</dbReference>
<dbReference type="InterPro" id="IPR029071">
    <property type="entry name" value="Ubiquitin-like_domsf"/>
</dbReference>
<dbReference type="InterPro" id="IPR029346">
    <property type="entry name" value="USP_C"/>
</dbReference>
<dbReference type="InterPro" id="IPR018200">
    <property type="entry name" value="USP_CS"/>
</dbReference>
<dbReference type="InterPro" id="IPR028889">
    <property type="entry name" value="USP_dom"/>
</dbReference>
<dbReference type="PANTHER" id="PTHR21646">
    <property type="entry name" value="UBIQUITIN CARBOXYL-TERMINAL HYDROLASE"/>
    <property type="match status" value="1"/>
</dbReference>
<dbReference type="PANTHER" id="PTHR21646:SF28">
    <property type="entry name" value="UBIQUITIN CARBOXYL-TERMINAL HYDROLASE 15"/>
    <property type="match status" value="1"/>
</dbReference>
<dbReference type="Pfam" id="PF06337">
    <property type="entry name" value="DUSP"/>
    <property type="match status" value="1"/>
</dbReference>
<dbReference type="Pfam" id="PF14836">
    <property type="entry name" value="Ubiquitin_3"/>
    <property type="match status" value="1"/>
</dbReference>
<dbReference type="Pfam" id="PF00443">
    <property type="entry name" value="UCH"/>
    <property type="match status" value="1"/>
</dbReference>
<dbReference type="Pfam" id="PF14533">
    <property type="entry name" value="USP7_C2"/>
    <property type="match status" value="1"/>
</dbReference>
<dbReference type="SMART" id="SM00695">
    <property type="entry name" value="DUSP"/>
    <property type="match status" value="1"/>
</dbReference>
<dbReference type="SUPFAM" id="SSF54001">
    <property type="entry name" value="Cysteine proteinases"/>
    <property type="match status" value="1"/>
</dbReference>
<dbReference type="SUPFAM" id="SSF143791">
    <property type="entry name" value="DUSP-like"/>
    <property type="match status" value="1"/>
</dbReference>
<dbReference type="SUPFAM" id="SSF55205">
    <property type="entry name" value="EPT/RTPC-like"/>
    <property type="match status" value="1"/>
</dbReference>
<dbReference type="SUPFAM" id="SSF54236">
    <property type="entry name" value="Ubiquitin-like"/>
    <property type="match status" value="1"/>
</dbReference>
<dbReference type="PROSITE" id="PS51283">
    <property type="entry name" value="DUSP"/>
    <property type="match status" value="1"/>
</dbReference>
<dbReference type="PROSITE" id="PS00972">
    <property type="entry name" value="USP_1"/>
    <property type="match status" value="1"/>
</dbReference>
<dbReference type="PROSITE" id="PS00973">
    <property type="entry name" value="USP_2"/>
    <property type="match status" value="1"/>
</dbReference>
<dbReference type="PROSITE" id="PS50235">
    <property type="entry name" value="USP_3"/>
    <property type="match status" value="1"/>
</dbReference>
<protein>
    <recommendedName>
        <fullName>Ubiquitin carboxyl-terminal hydrolase 15</fullName>
        <ecNumber evidence="8">3.4.19.12</ecNumber>
    </recommendedName>
    <alternativeName>
        <fullName>Deubiquitinating enzyme 15</fullName>
    </alternativeName>
    <alternativeName>
        <fullName>Ubiquitin carboxyl-terminal hydrolase of 109 kDa</fullName>
    </alternativeName>
    <alternativeName>
        <fullName>Ubiquitin thioesterase 15</fullName>
    </alternativeName>
    <alternativeName>
        <fullName>Ubiquitin-specific-processing protease 15</fullName>
    </alternativeName>
</protein>
<organism>
    <name type="scientific">Rattus norvegicus</name>
    <name type="common">Rat</name>
    <dbReference type="NCBI Taxonomy" id="10116"/>
    <lineage>
        <taxon>Eukaryota</taxon>
        <taxon>Metazoa</taxon>
        <taxon>Chordata</taxon>
        <taxon>Craniata</taxon>
        <taxon>Vertebrata</taxon>
        <taxon>Euteleostomi</taxon>
        <taxon>Mammalia</taxon>
        <taxon>Eutheria</taxon>
        <taxon>Euarchontoglires</taxon>
        <taxon>Glires</taxon>
        <taxon>Rodentia</taxon>
        <taxon>Myomorpha</taxon>
        <taxon>Muroidea</taxon>
        <taxon>Muridae</taxon>
        <taxon>Murinae</taxon>
        <taxon>Rattus</taxon>
    </lineage>
</organism>
<name>UBP15_RAT</name>
<comment type="function">
    <text evidence="2">Hydrolase that removes conjugated ubiquitin from target proteins and regulates various pathways such as the TGF-beta receptor signaling, NF-kappa-B and RNF41/NRDP1-PRKN pathways. Acts as a key regulator of TGF-beta receptor signaling pathway, but the precise mechanism is still unclear: according to a report, acts by promoting deubiquitination of monoubiquitinated R-SMADs (SMAD1, SMAD2 and/or SMAD3), thereby alleviating inhibition of R-SMADs and promoting activation of TGF-beta target genes. According to another reports, regulates the TGF-beta receptor signaling pathway by mediating deubiquitination and stabilization of TGFBR1, leading to an enhanced TGF-beta signal. Able to mediate deubiquitination of monoubiquitinated substrates, 'Lys-27'-, 'Lys-48'- and 'Lys-63'-linked polyubiquitin chains. May also regulate gene expression and/or DNA repair through the deubiquitination of histone H2B. Acts as an inhibitor of mitophagy by counteracting the action of parkin (PRKN): hydrolyzes cleavage of 'Lys-48'- and 'Lys-63'-linked polyubiquitin chains attached by parkin on target proteins such as MFN2, thereby reducing parkin's ability to drive mitophagy. Acts as an associated component of COP9 signalosome complex (CSN) and regulates different pathways via this association: regulates NF-kappa-B by mediating deubiquitination of NFKBIA and deubiquitinates substrates bound to VCP. Involved in endosome organization by mediating deubiquitination of SQSTM1: ubiquitinated SQSTM1 forms a molecular bridge that restrains cognate vesicles in the perinuclear region and its deubiquitination releases target vesicles for fast transport into the cell periphery. Acts as a negative regulator of antifungal immunity by mediating 'Lys-27'-linked deubiquitination of CARD9, thereby inactivating CARD9.</text>
</comment>
<comment type="catalytic activity">
    <reaction evidence="8">
        <text>Thiol-dependent hydrolysis of ester, thioester, amide, peptide and isopeptide bonds formed by the C-terminal Gly of ubiquitin (a 76-residue protein attached to proteins as an intracellular targeting signal).</text>
        <dbReference type="EC" id="3.4.19.12"/>
    </reaction>
</comment>
<comment type="subunit">
    <text evidence="2">A homodimer structure has been reported; however it is unclear whether the protein form a homodimer in vivo. Identified in a complex with the COP9 signalosome complex (CSN). Interacts with SMAD1, SMAD2 and SMAD3; the interaction is direct. Forms a complex with SMURF2 and SMAD7. Interacts with TGFBR1. Interacts with SART3; the interaction is direct. May interact with RNF20 and RNF40. May interact with PRKN. Interacts with INCA1.</text>
</comment>
<comment type="subcellular location">
    <subcellularLocation>
        <location evidence="8">Cytoplasm</location>
    </subcellularLocation>
    <subcellularLocation>
        <location evidence="8">Nucleus</location>
    </subcellularLocation>
    <subcellularLocation>
        <location evidence="2">Mitochondrion</location>
    </subcellularLocation>
</comment>
<comment type="tissue specificity">
    <text evidence="8">Highly expressed in testis and spleen, and at lower level in other tissues.</text>
</comment>
<comment type="PTM">
    <text evidence="2">Phosphorylated. Phosphorylation protects against ubiquitination and subsequent degradation by the proteasome.</text>
</comment>
<comment type="PTM">
    <text evidence="2">Ubiquitinated, leading to degradation by the proteasome.</text>
</comment>
<comment type="similarity">
    <text evidence="9">Belongs to the peptidase C19 family.</text>
</comment>
<evidence type="ECO:0000250" key="1">
    <source>
        <dbReference type="UniProtKB" id="Q8R5H1"/>
    </source>
</evidence>
<evidence type="ECO:0000250" key="2">
    <source>
        <dbReference type="UniProtKB" id="Q9Y4E8"/>
    </source>
</evidence>
<evidence type="ECO:0000255" key="3">
    <source>
        <dbReference type="PROSITE-ProRule" id="PRU00613"/>
    </source>
</evidence>
<evidence type="ECO:0000255" key="4">
    <source>
        <dbReference type="PROSITE-ProRule" id="PRU01035"/>
    </source>
</evidence>
<evidence type="ECO:0000255" key="5">
    <source>
        <dbReference type="PROSITE-ProRule" id="PRU10092"/>
    </source>
</evidence>
<evidence type="ECO:0000255" key="6">
    <source>
        <dbReference type="PROSITE-ProRule" id="PRU10093"/>
    </source>
</evidence>
<evidence type="ECO:0000256" key="7">
    <source>
        <dbReference type="SAM" id="MobiDB-lite"/>
    </source>
</evidence>
<evidence type="ECO:0000269" key="8">
    <source>
    </source>
</evidence>
<evidence type="ECO:0000305" key="9"/>
<sequence>MAEGGAADLDTQRSDIATLLKTSLRKGDTWYLVDSRWFKQWKKYVGFDSWDKYQMGDQNVYPGPIDNSGLLKDGDAQSLKEHLIDELDYILLPTEGWNKLVSWYTLMEGQEPIARKVVEQGMFVKHCKVEVYLTELKLCENGNMNNVVTRRFSKADTIDTIEKEIRKIFNIPDEKEARLWNKYMSNTFEPLNKPDSTIQDAGLYQGQVLVIEQKNEDGTWPRGPSAPNVKNSNYCLPSYTAYKNYDYSEPGRNNEQPGLCGLSNLGNTCFMNSAIQCLSNTPPLTEYFLNDKYQEELNFDNPLGMRGEIAKSYAELIKQMWSGKFSYVTPRAFKTQVGRFAPQFSGYQQQDCQELLAFLLDGLHEDLNRIRKKPYIQLKDADGRPDKVVAEEAWENHLKRNDSIIVDIFHGLFKSTLVCPECAKISVTFDPFCYLTLPLPMKKERSLEVYLVRMDPLAKPMQYKVIVPKIGNILDLCTALSALSGVPADKMIVTDIYNHRFHRIFAMDENLSSIMERDDIYVFEININRTEDTEHVVIPVCLREKFRHSSYTHHTGSSLFGQPFLMAVPRNNTEDKLYNLLLLRMCRYVKMSTETEETDGPLRCCEDQNINGNGPNGIHEEGSPSEMETDEPDDESSQDQELPSENENSQSEDSVGGDNDSENGLCTEETCKGRLTGHKKRLFTFQFNNLGNTDINYIKDDTRHIRFDDRQLRLDERSFLALDWDPDLKKRYFDENAAEDFEKHESVEYKPPKRPFVKLKDCIELFTTKEKLGAEDPWYCPNCKEHQQATKKLDLWSLPPVLVVHLKRFSYSRYMRDKLDTLVDFPISDLDMSEFLINPNAGPCRYNLIAVSNHYGGMGGGHYTAFAKNKDDGKWYYFDDSSVSSASEDQIVSKAAYVLFYQRQDTFSGTGFFPLDRETKGASAATGVPLESDEDSNDNDNDLENENCMHTN</sequence>
<gene>
    <name type="primary">Usp15</name>
    <name type="synonym">ubp109</name>
</gene>
<reference key="1">
    <citation type="journal article" date="2000" name="Biochem. J.">
        <title>Tissue-specificity, functional characterization and subcellular localization of a rat ubiquitin-specific processing protease, UBP109, whose mRNA expression is developmentally regulated.</title>
        <authorList>
            <person name="Park K.C."/>
            <person name="Choi E.J."/>
            <person name="Min S.W."/>
            <person name="Chung S.S."/>
            <person name="Kim H."/>
            <person name="Suzuki T."/>
            <person name="Tanaka K."/>
            <person name="Chung C.H."/>
        </authorList>
    </citation>
    <scope>NUCLEOTIDE SEQUENCE [MRNA]</scope>
    <scope>CATALYTIC ACTIVITY</scope>
    <scope>SUBCELLULAR LOCATION</scope>
    <scope>TISSUE SPECIFICITY</scope>
    <source>
        <tissue>Skeletal muscle</tissue>
    </source>
</reference>
<reference key="2">
    <citation type="journal article" date="2004" name="Nature">
        <title>Genome sequence of the Brown Norway rat yields insights into mammalian evolution.</title>
        <authorList>
            <person name="Gibbs R.A."/>
            <person name="Weinstock G.M."/>
            <person name="Metzker M.L."/>
            <person name="Muzny D.M."/>
            <person name="Sodergren E.J."/>
            <person name="Scherer S."/>
            <person name="Scott G."/>
            <person name="Steffen D."/>
            <person name="Worley K.C."/>
            <person name="Burch P.E."/>
            <person name="Okwuonu G."/>
            <person name="Hines S."/>
            <person name="Lewis L."/>
            <person name="Deramo C."/>
            <person name="Delgado O."/>
            <person name="Dugan-Rocha S."/>
            <person name="Miner G."/>
            <person name="Morgan M."/>
            <person name="Hawes A."/>
            <person name="Gill R."/>
            <person name="Holt R.A."/>
            <person name="Adams M.D."/>
            <person name="Amanatides P.G."/>
            <person name="Baden-Tillson H."/>
            <person name="Barnstead M."/>
            <person name="Chin S."/>
            <person name="Evans C.A."/>
            <person name="Ferriera S."/>
            <person name="Fosler C."/>
            <person name="Glodek A."/>
            <person name="Gu Z."/>
            <person name="Jennings D."/>
            <person name="Kraft C.L."/>
            <person name="Nguyen T."/>
            <person name="Pfannkoch C.M."/>
            <person name="Sitter C."/>
            <person name="Sutton G.G."/>
            <person name="Venter J.C."/>
            <person name="Woodage T."/>
            <person name="Smith D."/>
            <person name="Lee H.-M."/>
            <person name="Gustafson E."/>
            <person name="Cahill P."/>
            <person name="Kana A."/>
            <person name="Doucette-Stamm L."/>
            <person name="Weinstock K."/>
            <person name="Fechtel K."/>
            <person name="Weiss R.B."/>
            <person name="Dunn D.M."/>
            <person name="Green E.D."/>
            <person name="Blakesley R.W."/>
            <person name="Bouffard G.G."/>
            <person name="De Jong P.J."/>
            <person name="Osoegawa K."/>
            <person name="Zhu B."/>
            <person name="Marra M."/>
            <person name="Schein J."/>
            <person name="Bosdet I."/>
            <person name="Fjell C."/>
            <person name="Jones S."/>
            <person name="Krzywinski M."/>
            <person name="Mathewson C."/>
            <person name="Siddiqui A."/>
            <person name="Wye N."/>
            <person name="McPherson J."/>
            <person name="Zhao S."/>
            <person name="Fraser C.M."/>
            <person name="Shetty J."/>
            <person name="Shatsman S."/>
            <person name="Geer K."/>
            <person name="Chen Y."/>
            <person name="Abramzon S."/>
            <person name="Nierman W.C."/>
            <person name="Havlak P.H."/>
            <person name="Chen R."/>
            <person name="Durbin K.J."/>
            <person name="Egan A."/>
            <person name="Ren Y."/>
            <person name="Song X.-Z."/>
            <person name="Li B."/>
            <person name="Liu Y."/>
            <person name="Qin X."/>
            <person name="Cawley S."/>
            <person name="Cooney A.J."/>
            <person name="D'Souza L.M."/>
            <person name="Martin K."/>
            <person name="Wu J.Q."/>
            <person name="Gonzalez-Garay M.L."/>
            <person name="Jackson A.R."/>
            <person name="Kalafus K.J."/>
            <person name="McLeod M.P."/>
            <person name="Milosavljevic A."/>
            <person name="Virk D."/>
            <person name="Volkov A."/>
            <person name="Wheeler D.A."/>
            <person name="Zhang Z."/>
            <person name="Bailey J.A."/>
            <person name="Eichler E.E."/>
            <person name="Tuzun E."/>
            <person name="Birney E."/>
            <person name="Mongin E."/>
            <person name="Ureta-Vidal A."/>
            <person name="Woodwark C."/>
            <person name="Zdobnov E."/>
            <person name="Bork P."/>
            <person name="Suyama M."/>
            <person name="Torrents D."/>
            <person name="Alexandersson M."/>
            <person name="Trask B.J."/>
            <person name="Young J.M."/>
            <person name="Huang H."/>
            <person name="Wang H."/>
            <person name="Xing H."/>
            <person name="Daniels S."/>
            <person name="Gietzen D."/>
            <person name="Schmidt J."/>
            <person name="Stevens K."/>
            <person name="Vitt U."/>
            <person name="Wingrove J."/>
            <person name="Camara F."/>
            <person name="Mar Alba M."/>
            <person name="Abril J.F."/>
            <person name="Guigo R."/>
            <person name="Smit A."/>
            <person name="Dubchak I."/>
            <person name="Rubin E.M."/>
            <person name="Couronne O."/>
            <person name="Poliakov A."/>
            <person name="Huebner N."/>
            <person name="Ganten D."/>
            <person name="Goesele C."/>
            <person name="Hummel O."/>
            <person name="Kreitler T."/>
            <person name="Lee Y.-A."/>
            <person name="Monti J."/>
            <person name="Schulz H."/>
            <person name="Zimdahl H."/>
            <person name="Himmelbauer H."/>
            <person name="Lehrach H."/>
            <person name="Jacob H.J."/>
            <person name="Bromberg S."/>
            <person name="Gullings-Handley J."/>
            <person name="Jensen-Seaman M.I."/>
            <person name="Kwitek A.E."/>
            <person name="Lazar J."/>
            <person name="Pasko D."/>
            <person name="Tonellato P.J."/>
            <person name="Twigger S."/>
            <person name="Ponting C.P."/>
            <person name="Duarte J.M."/>
            <person name="Rice S."/>
            <person name="Goodstadt L."/>
            <person name="Beatson S.A."/>
            <person name="Emes R.D."/>
            <person name="Winter E.E."/>
            <person name="Webber C."/>
            <person name="Brandt P."/>
            <person name="Nyakatura G."/>
            <person name="Adetobi M."/>
            <person name="Chiaromonte F."/>
            <person name="Elnitski L."/>
            <person name="Eswara P."/>
            <person name="Hardison R.C."/>
            <person name="Hou M."/>
            <person name="Kolbe D."/>
            <person name="Makova K."/>
            <person name="Miller W."/>
            <person name="Nekrutenko A."/>
            <person name="Riemer C."/>
            <person name="Schwartz S."/>
            <person name="Taylor J."/>
            <person name="Yang S."/>
            <person name="Zhang Y."/>
            <person name="Lindpaintner K."/>
            <person name="Andrews T.D."/>
            <person name="Caccamo M."/>
            <person name="Clamp M."/>
            <person name="Clarke L."/>
            <person name="Curwen V."/>
            <person name="Durbin R.M."/>
            <person name="Eyras E."/>
            <person name="Searle S.M."/>
            <person name="Cooper G.M."/>
            <person name="Batzoglou S."/>
            <person name="Brudno M."/>
            <person name="Sidow A."/>
            <person name="Stone E.A."/>
            <person name="Payseur B.A."/>
            <person name="Bourque G."/>
            <person name="Lopez-Otin C."/>
            <person name="Puente X.S."/>
            <person name="Chakrabarti K."/>
            <person name="Chatterji S."/>
            <person name="Dewey C."/>
            <person name="Pachter L."/>
            <person name="Bray N."/>
            <person name="Yap V.B."/>
            <person name="Caspi A."/>
            <person name="Tesler G."/>
            <person name="Pevzner P.A."/>
            <person name="Haussler D."/>
            <person name="Roskin K.M."/>
            <person name="Baertsch R."/>
            <person name="Clawson H."/>
            <person name="Furey T.S."/>
            <person name="Hinrichs A.S."/>
            <person name="Karolchik D."/>
            <person name="Kent W.J."/>
            <person name="Rosenbloom K.R."/>
            <person name="Trumbower H."/>
            <person name="Weirauch M."/>
            <person name="Cooper D.N."/>
            <person name="Stenson P.D."/>
            <person name="Ma B."/>
            <person name="Brent M."/>
            <person name="Arumugam M."/>
            <person name="Shteynberg D."/>
            <person name="Copley R.R."/>
            <person name="Taylor M.S."/>
            <person name="Riethman H."/>
            <person name="Mudunuri U."/>
            <person name="Peterson J."/>
            <person name="Guyer M."/>
            <person name="Felsenfeld A."/>
            <person name="Old S."/>
            <person name="Mockrin S."/>
            <person name="Collins F.S."/>
        </authorList>
    </citation>
    <scope>NUCLEOTIDE SEQUENCE [LARGE SCALE GENOMIC DNA]</scope>
    <source>
        <strain>Brown Norway</strain>
    </source>
</reference>
<keyword id="KW-0007">Acetylation</keyword>
<keyword id="KW-0963">Cytoplasm</keyword>
<keyword id="KW-0378">Hydrolase</keyword>
<keyword id="KW-0496">Mitochondrion</keyword>
<keyword id="KW-0539">Nucleus</keyword>
<keyword id="KW-0597">Phosphoprotein</keyword>
<keyword id="KW-0645">Protease</keyword>
<keyword id="KW-1185">Reference proteome</keyword>
<keyword id="KW-0788">Thiol protease</keyword>
<keyword id="KW-0832">Ubl conjugation</keyword>
<keyword id="KW-0833">Ubl conjugation pathway</keyword>
<accession>Q9R085</accession>
<accession>E9PSP9</accession>